<accession>B1IK08</accession>
<gene>
    <name evidence="1" type="primary">argG</name>
    <name type="ordered locus">CLD_1894</name>
</gene>
<feature type="chain" id="PRO_1000089031" description="Argininosuccinate synthase">
    <location>
        <begin position="1"/>
        <end position="397"/>
    </location>
</feature>
<feature type="binding site" evidence="1">
    <location>
        <begin position="8"/>
        <end position="16"/>
    </location>
    <ligand>
        <name>ATP</name>
        <dbReference type="ChEBI" id="CHEBI:30616"/>
    </ligand>
</feature>
<feature type="binding site" evidence="1">
    <location>
        <position position="86"/>
    </location>
    <ligand>
        <name>L-citrulline</name>
        <dbReference type="ChEBI" id="CHEBI:57743"/>
    </ligand>
</feature>
<feature type="binding site" evidence="1">
    <location>
        <position position="91"/>
    </location>
    <ligand>
        <name>L-citrulline</name>
        <dbReference type="ChEBI" id="CHEBI:57743"/>
    </ligand>
</feature>
<feature type="binding site" evidence="1">
    <location>
        <position position="116"/>
    </location>
    <ligand>
        <name>ATP</name>
        <dbReference type="ChEBI" id="CHEBI:30616"/>
    </ligand>
</feature>
<feature type="binding site" evidence="1">
    <location>
        <position position="118"/>
    </location>
    <ligand>
        <name>L-aspartate</name>
        <dbReference type="ChEBI" id="CHEBI:29991"/>
    </ligand>
</feature>
<feature type="binding site" evidence="1">
    <location>
        <position position="122"/>
    </location>
    <ligand>
        <name>L-aspartate</name>
        <dbReference type="ChEBI" id="CHEBI:29991"/>
    </ligand>
</feature>
<feature type="binding site" evidence="1">
    <location>
        <position position="122"/>
    </location>
    <ligand>
        <name>L-citrulline</name>
        <dbReference type="ChEBI" id="CHEBI:57743"/>
    </ligand>
</feature>
<feature type="binding site" evidence="1">
    <location>
        <position position="123"/>
    </location>
    <ligand>
        <name>L-aspartate</name>
        <dbReference type="ChEBI" id="CHEBI:29991"/>
    </ligand>
</feature>
<feature type="binding site" evidence="1">
    <location>
        <position position="126"/>
    </location>
    <ligand>
        <name>L-citrulline</name>
        <dbReference type="ChEBI" id="CHEBI:57743"/>
    </ligand>
</feature>
<feature type="binding site" evidence="1">
    <location>
        <position position="175"/>
    </location>
    <ligand>
        <name>L-citrulline</name>
        <dbReference type="ChEBI" id="CHEBI:57743"/>
    </ligand>
</feature>
<feature type="binding site" evidence="1">
    <location>
        <position position="184"/>
    </location>
    <ligand>
        <name>L-citrulline</name>
        <dbReference type="ChEBI" id="CHEBI:57743"/>
    </ligand>
</feature>
<feature type="binding site" evidence="1">
    <location>
        <position position="260"/>
    </location>
    <ligand>
        <name>L-citrulline</name>
        <dbReference type="ChEBI" id="CHEBI:57743"/>
    </ligand>
</feature>
<feature type="binding site" evidence="1">
    <location>
        <position position="272"/>
    </location>
    <ligand>
        <name>L-citrulline</name>
        <dbReference type="ChEBI" id="CHEBI:57743"/>
    </ligand>
</feature>
<name>ASSY_CLOBK</name>
<sequence>MKEKVVLAYSGGLDTSIIIPWLKENYDLDVIAVCVNVGQGDDMDYVKTKAIKSGASKIYVEDVKEEFVVDYLYKAIKSEALYEQDYMLGTSFARPLMAKKLVEIAHKEQAKYICHGCTGKGNDQVRFEVGVKAQDPTIKIIAPWRIWDIKSREDAIDYAKKVGVEVPVTKKKIYSVDRNLWHVSHEGGDLEDLKNEHKEDMYFMVTPPEKAKDEPTYLEIYFEKGAPVKINGEFLNPVDIIDKLNTIGGENGIGIADIIENRLVGMKSRGIYETPAGTLLYAAHKKLESVTLDKYTYQYKKLVSAQYGELVYNGLWFTALREAIDAFVDKTQENVTGTVKLKLYKGNIKPCSVDTEYALYDEGISSFGESELYSHKDAEGFINLFGLPCKIKALKNF</sequence>
<proteinExistence type="inferred from homology"/>
<reference key="1">
    <citation type="journal article" date="2007" name="PLoS ONE">
        <title>Analysis of the neurotoxin complex genes in Clostridium botulinum A1-A4 and B1 strains: BoNT/A3, /Ba4 and /B1 clusters are located within plasmids.</title>
        <authorList>
            <person name="Smith T.J."/>
            <person name="Hill K.K."/>
            <person name="Foley B.T."/>
            <person name="Detter J.C."/>
            <person name="Munk A.C."/>
            <person name="Bruce D.C."/>
            <person name="Doggett N.A."/>
            <person name="Smith L.A."/>
            <person name="Marks J.D."/>
            <person name="Xie G."/>
            <person name="Brettin T.S."/>
        </authorList>
    </citation>
    <scope>NUCLEOTIDE SEQUENCE [LARGE SCALE GENOMIC DNA]</scope>
    <source>
        <strain>Okra / Type B1</strain>
    </source>
</reference>
<protein>
    <recommendedName>
        <fullName evidence="1">Argininosuccinate synthase</fullName>
        <ecNumber evidence="1">6.3.4.5</ecNumber>
    </recommendedName>
    <alternativeName>
        <fullName evidence="1">Citrulline--aspartate ligase</fullName>
    </alternativeName>
</protein>
<dbReference type="EC" id="6.3.4.5" evidence="1"/>
<dbReference type="EMBL" id="CP000939">
    <property type="protein sequence ID" value="ACA43366.1"/>
    <property type="molecule type" value="Genomic_DNA"/>
</dbReference>
<dbReference type="RefSeq" id="WP_012340092.1">
    <property type="nucleotide sequence ID" value="NC_010516.1"/>
</dbReference>
<dbReference type="SMR" id="B1IK08"/>
<dbReference type="KEGG" id="cbb:CLD_1894"/>
<dbReference type="HOGENOM" id="CLU_032784_4_2_9"/>
<dbReference type="UniPathway" id="UPA00068">
    <property type="reaction ID" value="UER00113"/>
</dbReference>
<dbReference type="Proteomes" id="UP000008541">
    <property type="component" value="Chromosome"/>
</dbReference>
<dbReference type="GO" id="GO:0005737">
    <property type="term" value="C:cytoplasm"/>
    <property type="evidence" value="ECO:0007669"/>
    <property type="project" value="UniProtKB-SubCell"/>
</dbReference>
<dbReference type="GO" id="GO:0004055">
    <property type="term" value="F:argininosuccinate synthase activity"/>
    <property type="evidence" value="ECO:0007669"/>
    <property type="project" value="UniProtKB-UniRule"/>
</dbReference>
<dbReference type="GO" id="GO:0005524">
    <property type="term" value="F:ATP binding"/>
    <property type="evidence" value="ECO:0007669"/>
    <property type="project" value="UniProtKB-UniRule"/>
</dbReference>
<dbReference type="GO" id="GO:0000053">
    <property type="term" value="P:argininosuccinate metabolic process"/>
    <property type="evidence" value="ECO:0007669"/>
    <property type="project" value="TreeGrafter"/>
</dbReference>
<dbReference type="GO" id="GO:0006526">
    <property type="term" value="P:L-arginine biosynthetic process"/>
    <property type="evidence" value="ECO:0007669"/>
    <property type="project" value="UniProtKB-UniRule"/>
</dbReference>
<dbReference type="GO" id="GO:0000050">
    <property type="term" value="P:urea cycle"/>
    <property type="evidence" value="ECO:0007669"/>
    <property type="project" value="TreeGrafter"/>
</dbReference>
<dbReference type="CDD" id="cd01999">
    <property type="entry name" value="ASS"/>
    <property type="match status" value="1"/>
</dbReference>
<dbReference type="FunFam" id="3.40.50.620:FF:000019">
    <property type="entry name" value="Argininosuccinate synthase"/>
    <property type="match status" value="1"/>
</dbReference>
<dbReference type="FunFam" id="3.90.1260.10:FF:000007">
    <property type="entry name" value="Argininosuccinate synthase"/>
    <property type="match status" value="1"/>
</dbReference>
<dbReference type="Gene3D" id="3.90.1260.10">
    <property type="entry name" value="Argininosuccinate synthetase, chain A, domain 2"/>
    <property type="match status" value="1"/>
</dbReference>
<dbReference type="Gene3D" id="3.40.50.620">
    <property type="entry name" value="HUPs"/>
    <property type="match status" value="1"/>
</dbReference>
<dbReference type="Gene3D" id="1.20.5.470">
    <property type="entry name" value="Single helix bin"/>
    <property type="match status" value="1"/>
</dbReference>
<dbReference type="HAMAP" id="MF_00005">
    <property type="entry name" value="Arg_succ_synth_type1"/>
    <property type="match status" value="1"/>
</dbReference>
<dbReference type="InterPro" id="IPR048268">
    <property type="entry name" value="Arginosuc_syn_C"/>
</dbReference>
<dbReference type="InterPro" id="IPR048267">
    <property type="entry name" value="Arginosuc_syn_N"/>
</dbReference>
<dbReference type="InterPro" id="IPR001518">
    <property type="entry name" value="Arginosuc_synth"/>
</dbReference>
<dbReference type="InterPro" id="IPR018223">
    <property type="entry name" value="Arginosuc_synth_CS"/>
</dbReference>
<dbReference type="InterPro" id="IPR023434">
    <property type="entry name" value="Arginosuc_synth_type_1_subfam"/>
</dbReference>
<dbReference type="InterPro" id="IPR024074">
    <property type="entry name" value="AS_cat/multimer_dom_body"/>
</dbReference>
<dbReference type="InterPro" id="IPR014729">
    <property type="entry name" value="Rossmann-like_a/b/a_fold"/>
</dbReference>
<dbReference type="NCBIfam" id="TIGR00032">
    <property type="entry name" value="argG"/>
    <property type="match status" value="1"/>
</dbReference>
<dbReference type="NCBIfam" id="NF001770">
    <property type="entry name" value="PRK00509.1"/>
    <property type="match status" value="1"/>
</dbReference>
<dbReference type="PANTHER" id="PTHR11587">
    <property type="entry name" value="ARGININOSUCCINATE SYNTHASE"/>
    <property type="match status" value="1"/>
</dbReference>
<dbReference type="PANTHER" id="PTHR11587:SF2">
    <property type="entry name" value="ARGININOSUCCINATE SYNTHASE"/>
    <property type="match status" value="1"/>
</dbReference>
<dbReference type="Pfam" id="PF20979">
    <property type="entry name" value="Arginosuc_syn_C"/>
    <property type="match status" value="1"/>
</dbReference>
<dbReference type="Pfam" id="PF00764">
    <property type="entry name" value="Arginosuc_synth"/>
    <property type="match status" value="1"/>
</dbReference>
<dbReference type="SUPFAM" id="SSF52402">
    <property type="entry name" value="Adenine nucleotide alpha hydrolases-like"/>
    <property type="match status" value="1"/>
</dbReference>
<dbReference type="SUPFAM" id="SSF69864">
    <property type="entry name" value="Argininosuccinate synthetase, C-terminal domain"/>
    <property type="match status" value="1"/>
</dbReference>
<dbReference type="PROSITE" id="PS00564">
    <property type="entry name" value="ARGININOSUCCIN_SYN_1"/>
    <property type="match status" value="1"/>
</dbReference>
<dbReference type="PROSITE" id="PS00565">
    <property type="entry name" value="ARGININOSUCCIN_SYN_2"/>
    <property type="match status" value="1"/>
</dbReference>
<evidence type="ECO:0000255" key="1">
    <source>
        <dbReference type="HAMAP-Rule" id="MF_00005"/>
    </source>
</evidence>
<comment type="catalytic activity">
    <reaction evidence="1">
        <text>L-citrulline + L-aspartate + ATP = 2-(N(omega)-L-arginino)succinate + AMP + diphosphate + H(+)</text>
        <dbReference type="Rhea" id="RHEA:10932"/>
        <dbReference type="ChEBI" id="CHEBI:15378"/>
        <dbReference type="ChEBI" id="CHEBI:29991"/>
        <dbReference type="ChEBI" id="CHEBI:30616"/>
        <dbReference type="ChEBI" id="CHEBI:33019"/>
        <dbReference type="ChEBI" id="CHEBI:57472"/>
        <dbReference type="ChEBI" id="CHEBI:57743"/>
        <dbReference type="ChEBI" id="CHEBI:456215"/>
        <dbReference type="EC" id="6.3.4.5"/>
    </reaction>
</comment>
<comment type="pathway">
    <text evidence="1">Amino-acid biosynthesis; L-arginine biosynthesis; L-arginine from L-ornithine and carbamoyl phosphate: step 2/3.</text>
</comment>
<comment type="subunit">
    <text evidence="1">Homotetramer.</text>
</comment>
<comment type="subcellular location">
    <subcellularLocation>
        <location evidence="1">Cytoplasm</location>
    </subcellularLocation>
</comment>
<comment type="similarity">
    <text evidence="1">Belongs to the argininosuccinate synthase family. Type 1 subfamily.</text>
</comment>
<keyword id="KW-0028">Amino-acid biosynthesis</keyword>
<keyword id="KW-0055">Arginine biosynthesis</keyword>
<keyword id="KW-0067">ATP-binding</keyword>
<keyword id="KW-0963">Cytoplasm</keyword>
<keyword id="KW-0436">Ligase</keyword>
<keyword id="KW-0547">Nucleotide-binding</keyword>
<organism>
    <name type="scientific">Clostridium botulinum (strain Okra / Type B1)</name>
    <dbReference type="NCBI Taxonomy" id="498213"/>
    <lineage>
        <taxon>Bacteria</taxon>
        <taxon>Bacillati</taxon>
        <taxon>Bacillota</taxon>
        <taxon>Clostridia</taxon>
        <taxon>Eubacteriales</taxon>
        <taxon>Clostridiaceae</taxon>
        <taxon>Clostridium</taxon>
    </lineage>
</organism>